<protein>
    <recommendedName>
        <fullName evidence="1">4-hydroxy-3-methylbut-2-enyl diphosphate reductase</fullName>
        <shortName evidence="1">HMBPP reductase</shortName>
        <ecNumber evidence="1">1.17.7.4</ecNumber>
    </recommendedName>
</protein>
<organism>
    <name type="scientific">Pseudomonas aeruginosa (strain ATCC 15692 / DSM 22644 / CIP 104116 / JCM 14847 / LMG 12228 / 1C / PRS 101 / PAO1)</name>
    <dbReference type="NCBI Taxonomy" id="208964"/>
    <lineage>
        <taxon>Bacteria</taxon>
        <taxon>Pseudomonadati</taxon>
        <taxon>Pseudomonadota</taxon>
        <taxon>Gammaproteobacteria</taxon>
        <taxon>Pseudomonadales</taxon>
        <taxon>Pseudomonadaceae</taxon>
        <taxon>Pseudomonas</taxon>
    </lineage>
</organism>
<gene>
    <name evidence="1" type="primary">ispH</name>
    <name type="synonym">lytB</name>
    <name type="ordered locus">PA4557</name>
</gene>
<feature type="chain" id="PRO_0000128857" description="4-hydroxy-3-methylbut-2-enyl diphosphate reductase">
    <location>
        <begin position="1"/>
        <end position="314"/>
    </location>
</feature>
<feature type="active site" description="Proton donor" evidence="1">
    <location>
        <position position="126"/>
    </location>
</feature>
<feature type="binding site" evidence="1">
    <location>
        <position position="12"/>
    </location>
    <ligand>
        <name>[4Fe-4S] cluster</name>
        <dbReference type="ChEBI" id="CHEBI:49883"/>
    </ligand>
</feature>
<feature type="binding site" evidence="1">
    <location>
        <position position="41"/>
    </location>
    <ligand>
        <name>(2E)-4-hydroxy-3-methylbut-2-enyl diphosphate</name>
        <dbReference type="ChEBI" id="CHEBI:128753"/>
    </ligand>
</feature>
<feature type="binding site" evidence="1">
    <location>
        <position position="41"/>
    </location>
    <ligand>
        <name>dimethylallyl diphosphate</name>
        <dbReference type="ChEBI" id="CHEBI:57623"/>
    </ligand>
</feature>
<feature type="binding site" evidence="1">
    <location>
        <position position="41"/>
    </location>
    <ligand>
        <name>isopentenyl diphosphate</name>
        <dbReference type="ChEBI" id="CHEBI:128769"/>
    </ligand>
</feature>
<feature type="binding site" evidence="1">
    <location>
        <position position="74"/>
    </location>
    <ligand>
        <name>(2E)-4-hydroxy-3-methylbut-2-enyl diphosphate</name>
        <dbReference type="ChEBI" id="CHEBI:128753"/>
    </ligand>
</feature>
<feature type="binding site" evidence="1">
    <location>
        <position position="74"/>
    </location>
    <ligand>
        <name>dimethylallyl diphosphate</name>
        <dbReference type="ChEBI" id="CHEBI:57623"/>
    </ligand>
</feature>
<feature type="binding site" evidence="1">
    <location>
        <position position="74"/>
    </location>
    <ligand>
        <name>isopentenyl diphosphate</name>
        <dbReference type="ChEBI" id="CHEBI:128769"/>
    </ligand>
</feature>
<feature type="binding site" evidence="1">
    <location>
        <position position="96"/>
    </location>
    <ligand>
        <name>[4Fe-4S] cluster</name>
        <dbReference type="ChEBI" id="CHEBI:49883"/>
    </ligand>
</feature>
<feature type="binding site" evidence="1">
    <location>
        <position position="124"/>
    </location>
    <ligand>
        <name>(2E)-4-hydroxy-3-methylbut-2-enyl diphosphate</name>
        <dbReference type="ChEBI" id="CHEBI:128753"/>
    </ligand>
</feature>
<feature type="binding site" evidence="1">
    <location>
        <position position="124"/>
    </location>
    <ligand>
        <name>dimethylallyl diphosphate</name>
        <dbReference type="ChEBI" id="CHEBI:57623"/>
    </ligand>
</feature>
<feature type="binding site" evidence="1">
    <location>
        <position position="124"/>
    </location>
    <ligand>
        <name>isopentenyl diphosphate</name>
        <dbReference type="ChEBI" id="CHEBI:128769"/>
    </ligand>
</feature>
<feature type="binding site" evidence="1">
    <location>
        <position position="168"/>
    </location>
    <ligand>
        <name>(2E)-4-hydroxy-3-methylbut-2-enyl diphosphate</name>
        <dbReference type="ChEBI" id="CHEBI:128753"/>
    </ligand>
</feature>
<feature type="binding site" evidence="1">
    <location>
        <position position="198"/>
    </location>
    <ligand>
        <name>[4Fe-4S] cluster</name>
        <dbReference type="ChEBI" id="CHEBI:49883"/>
    </ligand>
</feature>
<feature type="binding site" evidence="1">
    <location>
        <position position="226"/>
    </location>
    <ligand>
        <name>(2E)-4-hydroxy-3-methylbut-2-enyl diphosphate</name>
        <dbReference type="ChEBI" id="CHEBI:128753"/>
    </ligand>
</feature>
<feature type="binding site" evidence="1">
    <location>
        <position position="226"/>
    </location>
    <ligand>
        <name>dimethylallyl diphosphate</name>
        <dbReference type="ChEBI" id="CHEBI:57623"/>
    </ligand>
</feature>
<feature type="binding site" evidence="1">
    <location>
        <position position="226"/>
    </location>
    <ligand>
        <name>isopentenyl diphosphate</name>
        <dbReference type="ChEBI" id="CHEBI:128769"/>
    </ligand>
</feature>
<feature type="binding site" evidence="1">
    <location>
        <position position="227"/>
    </location>
    <ligand>
        <name>(2E)-4-hydroxy-3-methylbut-2-enyl diphosphate</name>
        <dbReference type="ChEBI" id="CHEBI:128753"/>
    </ligand>
</feature>
<feature type="binding site" evidence="1">
    <location>
        <position position="227"/>
    </location>
    <ligand>
        <name>dimethylallyl diphosphate</name>
        <dbReference type="ChEBI" id="CHEBI:57623"/>
    </ligand>
</feature>
<feature type="binding site" evidence="1">
    <location>
        <position position="227"/>
    </location>
    <ligand>
        <name>isopentenyl diphosphate</name>
        <dbReference type="ChEBI" id="CHEBI:128769"/>
    </ligand>
</feature>
<feature type="binding site" evidence="1">
    <location>
        <position position="228"/>
    </location>
    <ligand>
        <name>(2E)-4-hydroxy-3-methylbut-2-enyl diphosphate</name>
        <dbReference type="ChEBI" id="CHEBI:128753"/>
    </ligand>
</feature>
<feature type="binding site" evidence="1">
    <location>
        <position position="228"/>
    </location>
    <ligand>
        <name>dimethylallyl diphosphate</name>
        <dbReference type="ChEBI" id="CHEBI:57623"/>
    </ligand>
</feature>
<feature type="binding site" evidence="1">
    <location>
        <position position="228"/>
    </location>
    <ligand>
        <name>isopentenyl diphosphate</name>
        <dbReference type="ChEBI" id="CHEBI:128769"/>
    </ligand>
</feature>
<feature type="binding site" evidence="1">
    <location>
        <position position="270"/>
    </location>
    <ligand>
        <name>(2E)-4-hydroxy-3-methylbut-2-enyl diphosphate</name>
        <dbReference type="ChEBI" id="CHEBI:128753"/>
    </ligand>
</feature>
<feature type="binding site" evidence="1">
    <location>
        <position position="270"/>
    </location>
    <ligand>
        <name>dimethylallyl diphosphate</name>
        <dbReference type="ChEBI" id="CHEBI:57623"/>
    </ligand>
</feature>
<feature type="binding site" evidence="1">
    <location>
        <position position="270"/>
    </location>
    <ligand>
        <name>isopentenyl diphosphate</name>
        <dbReference type="ChEBI" id="CHEBI:128769"/>
    </ligand>
</feature>
<feature type="sequence conflict" description="In Ref. 1; AAP81279." evidence="2" ref="1">
    <original>N</original>
    <variation>D</variation>
    <location>
        <position position="65"/>
    </location>
</feature>
<keyword id="KW-0004">4Fe-4S</keyword>
<keyword id="KW-0408">Iron</keyword>
<keyword id="KW-0411">Iron-sulfur</keyword>
<keyword id="KW-0414">Isoprene biosynthesis</keyword>
<keyword id="KW-0479">Metal-binding</keyword>
<keyword id="KW-0560">Oxidoreductase</keyword>
<keyword id="KW-1185">Reference proteome</keyword>
<name>ISPH_PSEAE</name>
<comment type="function">
    <text evidence="1">Catalyzes the conversion of 1-hydroxy-2-methyl-2-(E)-butenyl 4-diphosphate (HMBPP) into a mixture of isopentenyl diphosphate (IPP) and dimethylallyl diphosphate (DMAPP). Acts in the terminal step of the DOXP/MEP pathway for isoprenoid precursor biosynthesis.</text>
</comment>
<comment type="catalytic activity">
    <reaction evidence="1">
        <text>isopentenyl diphosphate + 2 oxidized [2Fe-2S]-[ferredoxin] + H2O = (2E)-4-hydroxy-3-methylbut-2-enyl diphosphate + 2 reduced [2Fe-2S]-[ferredoxin] + 2 H(+)</text>
        <dbReference type="Rhea" id="RHEA:24488"/>
        <dbReference type="Rhea" id="RHEA-COMP:10000"/>
        <dbReference type="Rhea" id="RHEA-COMP:10001"/>
        <dbReference type="ChEBI" id="CHEBI:15377"/>
        <dbReference type="ChEBI" id="CHEBI:15378"/>
        <dbReference type="ChEBI" id="CHEBI:33737"/>
        <dbReference type="ChEBI" id="CHEBI:33738"/>
        <dbReference type="ChEBI" id="CHEBI:128753"/>
        <dbReference type="ChEBI" id="CHEBI:128769"/>
        <dbReference type="EC" id="1.17.7.4"/>
    </reaction>
</comment>
<comment type="catalytic activity">
    <reaction evidence="1">
        <text>dimethylallyl diphosphate + 2 oxidized [2Fe-2S]-[ferredoxin] + H2O = (2E)-4-hydroxy-3-methylbut-2-enyl diphosphate + 2 reduced [2Fe-2S]-[ferredoxin] + 2 H(+)</text>
        <dbReference type="Rhea" id="RHEA:24825"/>
        <dbReference type="Rhea" id="RHEA-COMP:10000"/>
        <dbReference type="Rhea" id="RHEA-COMP:10001"/>
        <dbReference type="ChEBI" id="CHEBI:15377"/>
        <dbReference type="ChEBI" id="CHEBI:15378"/>
        <dbReference type="ChEBI" id="CHEBI:33737"/>
        <dbReference type="ChEBI" id="CHEBI:33738"/>
        <dbReference type="ChEBI" id="CHEBI:57623"/>
        <dbReference type="ChEBI" id="CHEBI:128753"/>
        <dbReference type="EC" id="1.17.7.4"/>
    </reaction>
</comment>
<comment type="cofactor">
    <cofactor evidence="1">
        <name>[4Fe-4S] cluster</name>
        <dbReference type="ChEBI" id="CHEBI:49883"/>
    </cofactor>
    <text evidence="1">Binds 1 [4Fe-4S] cluster per subunit.</text>
</comment>
<comment type="pathway">
    <text evidence="1">Isoprenoid biosynthesis; dimethylallyl diphosphate biosynthesis; dimethylallyl diphosphate from (2E)-4-hydroxy-3-methylbutenyl diphosphate: step 1/1.</text>
</comment>
<comment type="pathway">
    <text evidence="1">Isoprenoid biosynthesis; isopentenyl diphosphate biosynthesis via DXP pathway; isopentenyl diphosphate from 1-deoxy-D-xylulose 5-phosphate: step 6/6.</text>
</comment>
<comment type="similarity">
    <text evidence="1">Belongs to the IspH family.</text>
</comment>
<sequence length="314" mass="34762">MQIKLANPRGFCAGVDRAIEIVNRALDVFGPPIYVRHEVVHNKFVVDNLRQRGAIFVEELDQVPNNVIVIFSAHGVSQAVRKEAEGRGLKVFDATCPLVTKVHMEVVRYSRDGHECVLIGHEGHPEVEGTMGQYDASNGGAIYLVEDEADVAALEVRKPEALHYVTQTTLSMDDTSKVIDALRAKFPQIQGPRKNDICYATQNRQDAVKELADQCDMVLVVGSPNSSNSNRLRELAERMGTPAYLIDGAEDMQRGWFDGVRRIGITAGASAPEVLVRGVIAQLREWGASEEQELEGREENITFSMPKELRVKAL</sequence>
<dbReference type="EC" id="1.17.7.4" evidence="1"/>
<dbReference type="EMBL" id="AY273871">
    <property type="protein sequence ID" value="AAP81279.1"/>
    <property type="molecule type" value="Genomic_DNA"/>
</dbReference>
<dbReference type="EMBL" id="AE004091">
    <property type="protein sequence ID" value="AAG07945.1"/>
    <property type="molecule type" value="Genomic_DNA"/>
</dbReference>
<dbReference type="PIR" id="G83076">
    <property type="entry name" value="G83076"/>
</dbReference>
<dbReference type="RefSeq" id="NP_253247.1">
    <property type="nucleotide sequence ID" value="NC_002516.2"/>
</dbReference>
<dbReference type="RefSeq" id="WP_003112824.1">
    <property type="nucleotide sequence ID" value="NZ_QZGE01000004.1"/>
</dbReference>
<dbReference type="SMR" id="Q9HVM7"/>
<dbReference type="FunCoup" id="Q9HVM7">
    <property type="interactions" value="508"/>
</dbReference>
<dbReference type="STRING" id="208964.PA4557"/>
<dbReference type="BindingDB" id="Q9HVM7"/>
<dbReference type="PaxDb" id="208964-PA4557"/>
<dbReference type="DNASU" id="879669"/>
<dbReference type="GeneID" id="879669"/>
<dbReference type="KEGG" id="pae:PA4557"/>
<dbReference type="PATRIC" id="fig|208964.12.peg.4769"/>
<dbReference type="PseudoCAP" id="PA4557"/>
<dbReference type="HOGENOM" id="CLU_027486_1_0_6"/>
<dbReference type="InParanoid" id="Q9HVM7"/>
<dbReference type="OrthoDB" id="9804068at2"/>
<dbReference type="PhylomeDB" id="Q9HVM7"/>
<dbReference type="BioCyc" id="PAER208964:G1FZ6-4650-MONOMER"/>
<dbReference type="UniPathway" id="UPA00056">
    <property type="reaction ID" value="UER00097"/>
</dbReference>
<dbReference type="UniPathway" id="UPA00059">
    <property type="reaction ID" value="UER00105"/>
</dbReference>
<dbReference type="Proteomes" id="UP000002438">
    <property type="component" value="Chromosome"/>
</dbReference>
<dbReference type="GO" id="GO:0005829">
    <property type="term" value="C:cytosol"/>
    <property type="evidence" value="ECO:0000318"/>
    <property type="project" value="GO_Central"/>
</dbReference>
<dbReference type="GO" id="GO:0051539">
    <property type="term" value="F:4 iron, 4 sulfur cluster binding"/>
    <property type="evidence" value="ECO:0007669"/>
    <property type="project" value="UniProtKB-UniRule"/>
</dbReference>
<dbReference type="GO" id="GO:0051745">
    <property type="term" value="F:4-hydroxy-3-methylbut-2-enyl diphosphate reductase activity"/>
    <property type="evidence" value="ECO:0000318"/>
    <property type="project" value="GO_Central"/>
</dbReference>
<dbReference type="GO" id="GO:0046872">
    <property type="term" value="F:metal ion binding"/>
    <property type="evidence" value="ECO:0007669"/>
    <property type="project" value="UniProtKB-KW"/>
</dbReference>
<dbReference type="GO" id="GO:0050992">
    <property type="term" value="P:dimethylallyl diphosphate biosynthetic process"/>
    <property type="evidence" value="ECO:0007669"/>
    <property type="project" value="UniProtKB-UniRule"/>
</dbReference>
<dbReference type="GO" id="GO:0019288">
    <property type="term" value="P:isopentenyl diphosphate biosynthetic process, methylerythritol 4-phosphate pathway"/>
    <property type="evidence" value="ECO:0000318"/>
    <property type="project" value="GO_Central"/>
</dbReference>
<dbReference type="GO" id="GO:0016114">
    <property type="term" value="P:terpenoid biosynthetic process"/>
    <property type="evidence" value="ECO:0007669"/>
    <property type="project" value="UniProtKB-UniRule"/>
</dbReference>
<dbReference type="CDD" id="cd13944">
    <property type="entry name" value="lytB_ispH"/>
    <property type="match status" value="1"/>
</dbReference>
<dbReference type="Gene3D" id="3.40.50.11270">
    <property type="match status" value="1"/>
</dbReference>
<dbReference type="Gene3D" id="3.40.1010.20">
    <property type="entry name" value="4-hydroxy-3-methylbut-2-enyl diphosphate reductase, catalytic domain"/>
    <property type="match status" value="2"/>
</dbReference>
<dbReference type="HAMAP" id="MF_00191">
    <property type="entry name" value="IspH"/>
    <property type="match status" value="1"/>
</dbReference>
<dbReference type="InterPro" id="IPR003451">
    <property type="entry name" value="LytB/IspH"/>
</dbReference>
<dbReference type="NCBIfam" id="TIGR00216">
    <property type="entry name" value="ispH_lytB"/>
    <property type="match status" value="1"/>
</dbReference>
<dbReference type="NCBIfam" id="NF002188">
    <property type="entry name" value="PRK01045.1-2"/>
    <property type="match status" value="1"/>
</dbReference>
<dbReference type="NCBIfam" id="NF002190">
    <property type="entry name" value="PRK01045.1-4"/>
    <property type="match status" value="1"/>
</dbReference>
<dbReference type="PANTHER" id="PTHR30426">
    <property type="entry name" value="4-HYDROXY-3-METHYLBUT-2-ENYL DIPHOSPHATE REDUCTASE"/>
    <property type="match status" value="1"/>
</dbReference>
<dbReference type="PANTHER" id="PTHR30426:SF0">
    <property type="entry name" value="4-HYDROXY-3-METHYLBUT-2-ENYL DIPHOSPHATE REDUCTASE"/>
    <property type="match status" value="1"/>
</dbReference>
<dbReference type="Pfam" id="PF02401">
    <property type="entry name" value="LYTB"/>
    <property type="match status" value="1"/>
</dbReference>
<reference key="1">
    <citation type="journal article" date="2004" name="Proc. Natl. Acad. Sci. U.S.A.">
        <title>The broad host range pathogen Pseudomonas aeruginosa strain PA14 carries two pathogenicity islands harboring plant and animal virulence genes.</title>
        <authorList>
            <person name="He J."/>
            <person name="Baldini R.L."/>
            <person name="Deziel E."/>
            <person name="Saucier M."/>
            <person name="Zhang Q."/>
            <person name="Liberati N.T."/>
            <person name="Lee D."/>
            <person name="Urbach J."/>
            <person name="Goodman H.M."/>
            <person name="Rahme L.G."/>
        </authorList>
    </citation>
    <scope>NUCLEOTIDE SEQUENCE [GENOMIC DNA]</scope>
    <source>
        <strain>PA14</strain>
    </source>
</reference>
<reference key="2">
    <citation type="journal article" date="2000" name="Nature">
        <title>Complete genome sequence of Pseudomonas aeruginosa PAO1, an opportunistic pathogen.</title>
        <authorList>
            <person name="Stover C.K."/>
            <person name="Pham X.-Q.T."/>
            <person name="Erwin A.L."/>
            <person name="Mizoguchi S.D."/>
            <person name="Warrener P."/>
            <person name="Hickey M.J."/>
            <person name="Brinkman F.S.L."/>
            <person name="Hufnagle W.O."/>
            <person name="Kowalik D.J."/>
            <person name="Lagrou M."/>
            <person name="Garber R.L."/>
            <person name="Goltry L."/>
            <person name="Tolentino E."/>
            <person name="Westbrock-Wadman S."/>
            <person name="Yuan Y."/>
            <person name="Brody L.L."/>
            <person name="Coulter S.N."/>
            <person name="Folger K.R."/>
            <person name="Kas A."/>
            <person name="Larbig K."/>
            <person name="Lim R.M."/>
            <person name="Smith K.A."/>
            <person name="Spencer D.H."/>
            <person name="Wong G.K.-S."/>
            <person name="Wu Z."/>
            <person name="Paulsen I.T."/>
            <person name="Reizer J."/>
            <person name="Saier M.H. Jr."/>
            <person name="Hancock R.E.W."/>
            <person name="Lory S."/>
            <person name="Olson M.V."/>
        </authorList>
    </citation>
    <scope>NUCLEOTIDE SEQUENCE [LARGE SCALE GENOMIC DNA]</scope>
    <source>
        <strain>ATCC 15692 / DSM 22644 / CIP 104116 / JCM 14847 / LMG 12228 / 1C / PRS 101 / PAO1</strain>
    </source>
</reference>
<accession>Q9HVM7</accession>
<accession>Q7WZN6</accession>
<proteinExistence type="inferred from homology"/>
<evidence type="ECO:0000255" key="1">
    <source>
        <dbReference type="HAMAP-Rule" id="MF_00191"/>
    </source>
</evidence>
<evidence type="ECO:0000305" key="2"/>